<name>NHAA_RENSM</name>
<feature type="chain" id="PRO_0000334387" description="Na(+)/H(+) antiporter NhaA">
    <location>
        <begin position="1"/>
        <end position="436"/>
    </location>
</feature>
<feature type="transmembrane region" description="Helical" evidence="1">
    <location>
        <begin position="31"/>
        <end position="51"/>
    </location>
</feature>
<feature type="transmembrane region" description="Helical" evidence="1">
    <location>
        <begin position="74"/>
        <end position="94"/>
    </location>
</feature>
<feature type="transmembrane region" description="Helical" evidence="1">
    <location>
        <begin position="112"/>
        <end position="132"/>
    </location>
</feature>
<feature type="transmembrane region" description="Helical" evidence="1">
    <location>
        <begin position="143"/>
        <end position="163"/>
    </location>
</feature>
<feature type="transmembrane region" description="Helical" evidence="1">
    <location>
        <begin position="173"/>
        <end position="193"/>
    </location>
</feature>
<feature type="transmembrane region" description="Helical" evidence="1">
    <location>
        <begin position="196"/>
        <end position="216"/>
    </location>
</feature>
<feature type="transmembrane region" description="Helical" evidence="1">
    <location>
        <begin position="222"/>
        <end position="242"/>
    </location>
</feature>
<feature type="transmembrane region" description="Helical" evidence="1">
    <location>
        <begin position="285"/>
        <end position="305"/>
    </location>
</feature>
<feature type="transmembrane region" description="Helical" evidence="1">
    <location>
        <begin position="315"/>
        <end position="335"/>
    </location>
</feature>
<feature type="transmembrane region" description="Helical" evidence="1">
    <location>
        <begin position="350"/>
        <end position="370"/>
    </location>
</feature>
<feature type="transmembrane region" description="Helical" evidence="1">
    <location>
        <begin position="384"/>
        <end position="404"/>
    </location>
</feature>
<proteinExistence type="inferred from homology"/>
<reference key="1">
    <citation type="journal article" date="2008" name="J. Bacteriol.">
        <title>Genome sequence of the fish pathogen Renibacterium salmoninarum suggests reductive evolution away from an environmental Arthrobacter ancestor.</title>
        <authorList>
            <person name="Wiens G.D."/>
            <person name="Rockey D.D."/>
            <person name="Wu Z."/>
            <person name="Chang J."/>
            <person name="Levy R."/>
            <person name="Crane S."/>
            <person name="Chen D.S."/>
            <person name="Capri G.R."/>
            <person name="Burnett J.R."/>
            <person name="Sudheesh P.S."/>
            <person name="Schipma M.J."/>
            <person name="Burd H."/>
            <person name="Bhattacharyya A."/>
            <person name="Rhodes L.D."/>
            <person name="Kaul R."/>
            <person name="Strom M.S."/>
        </authorList>
    </citation>
    <scope>NUCLEOTIDE SEQUENCE [LARGE SCALE GENOMIC DNA]</scope>
    <source>
        <strain>ATCC 33209 / DSM 20767 / JCM 11484 / NBRC 15589 / NCIMB 2235</strain>
    </source>
</reference>
<protein>
    <recommendedName>
        <fullName evidence="1">Na(+)/H(+) antiporter NhaA</fullName>
    </recommendedName>
    <alternativeName>
        <fullName evidence="1">Sodium/proton antiporter NhaA</fullName>
    </alternativeName>
</protein>
<organism>
    <name type="scientific">Renibacterium salmoninarum (strain ATCC 33209 / DSM 20767 / JCM 11484 / NBRC 15589 / NCIMB 2235)</name>
    <dbReference type="NCBI Taxonomy" id="288705"/>
    <lineage>
        <taxon>Bacteria</taxon>
        <taxon>Bacillati</taxon>
        <taxon>Actinomycetota</taxon>
        <taxon>Actinomycetes</taxon>
        <taxon>Micrococcales</taxon>
        <taxon>Micrococcaceae</taxon>
        <taxon>Renibacterium</taxon>
    </lineage>
</organism>
<sequence>MITSRTARRTFRRNSYPEHLRITAILRKETVGGALLLAATIAALIWANSPGSESYFALRDAKIGFNPFGLKLDLSLGAWASDGLLAIFFFIAGLELKREFIAGDLRRFDRAIVPIAAAIGGVAVPAIIYTLINLSSGAEILNGWAIPTATDIAFALAVLAVISTHLPTALRTFLLTLAVVDDLIAISIIAVFYPHNLQPQYLALALIPLGLFTWAVQKRIRSWYLLLPLAIITWVLVHESGVHATVAGVLLAFAVPVVRRDRNPDNGPGLAEHFEHRFRPLSAGVAVPIFAFFSAGVAIGGWAGFTNSLTDTVAIGIIAALILGKAIGIFGATFLITKTTRASLDDGLSWIDVLGLAILAGIGFTVSLLISELAFGADSPHNDHAKVAILTASLVAALLATVILRIRNQHYRKLEKLESVDADGDGVPDVFDEKDD</sequence>
<accession>A9WU27</accession>
<dbReference type="EMBL" id="CP000910">
    <property type="protein sequence ID" value="ABY24698.1"/>
    <property type="molecule type" value="Genomic_DNA"/>
</dbReference>
<dbReference type="RefSeq" id="WP_012246343.1">
    <property type="nucleotide sequence ID" value="NC_010168.1"/>
</dbReference>
<dbReference type="SMR" id="A9WU27"/>
<dbReference type="STRING" id="288705.RSal33209_2976"/>
<dbReference type="KEGG" id="rsa:RSal33209_2976"/>
<dbReference type="eggNOG" id="COG3004">
    <property type="taxonomic scope" value="Bacteria"/>
</dbReference>
<dbReference type="HOGENOM" id="CLU_015803_0_0_11"/>
<dbReference type="Proteomes" id="UP000002007">
    <property type="component" value="Chromosome"/>
</dbReference>
<dbReference type="GO" id="GO:0005886">
    <property type="term" value="C:plasma membrane"/>
    <property type="evidence" value="ECO:0007669"/>
    <property type="project" value="UniProtKB-SubCell"/>
</dbReference>
<dbReference type="GO" id="GO:0015385">
    <property type="term" value="F:sodium:proton antiporter activity"/>
    <property type="evidence" value="ECO:0007669"/>
    <property type="project" value="TreeGrafter"/>
</dbReference>
<dbReference type="GO" id="GO:0006885">
    <property type="term" value="P:regulation of pH"/>
    <property type="evidence" value="ECO:0007669"/>
    <property type="project" value="InterPro"/>
</dbReference>
<dbReference type="Gene3D" id="1.20.1530.10">
    <property type="entry name" value="Na+/H+ antiporter like domain"/>
    <property type="match status" value="1"/>
</dbReference>
<dbReference type="HAMAP" id="MF_01844">
    <property type="entry name" value="NhaA"/>
    <property type="match status" value="1"/>
</dbReference>
<dbReference type="InterPro" id="IPR023171">
    <property type="entry name" value="Na/H_antiporter_dom_sf"/>
</dbReference>
<dbReference type="InterPro" id="IPR004670">
    <property type="entry name" value="NhaA"/>
</dbReference>
<dbReference type="NCBIfam" id="TIGR00773">
    <property type="entry name" value="NhaA"/>
    <property type="match status" value="1"/>
</dbReference>
<dbReference type="PANTHER" id="PTHR30341:SF0">
    <property type="entry name" value="NA(+)_H(+) ANTIPORTER NHAA"/>
    <property type="match status" value="1"/>
</dbReference>
<dbReference type="PANTHER" id="PTHR30341">
    <property type="entry name" value="SODIUM ION/PROTON ANTIPORTER NHAA-RELATED"/>
    <property type="match status" value="1"/>
</dbReference>
<dbReference type="Pfam" id="PF06965">
    <property type="entry name" value="Na_H_antiport_1"/>
    <property type="match status" value="1"/>
</dbReference>
<evidence type="ECO:0000255" key="1">
    <source>
        <dbReference type="HAMAP-Rule" id="MF_01844"/>
    </source>
</evidence>
<comment type="function">
    <text evidence="1">Na(+)/H(+) antiporter that extrudes sodium in exchange for external protons.</text>
</comment>
<comment type="catalytic activity">
    <reaction evidence="1">
        <text>Na(+)(in) + 2 H(+)(out) = Na(+)(out) + 2 H(+)(in)</text>
        <dbReference type="Rhea" id="RHEA:29251"/>
        <dbReference type="ChEBI" id="CHEBI:15378"/>
        <dbReference type="ChEBI" id="CHEBI:29101"/>
    </reaction>
    <physiologicalReaction direction="left-to-right" evidence="1">
        <dbReference type="Rhea" id="RHEA:29252"/>
    </physiologicalReaction>
</comment>
<comment type="subcellular location">
    <subcellularLocation>
        <location evidence="1">Cell membrane</location>
        <topology evidence="1">Multi-pass membrane protein</topology>
    </subcellularLocation>
</comment>
<comment type="similarity">
    <text evidence="1">Belongs to the NhaA Na(+)/H(+) (TC 2.A.33) antiporter family.</text>
</comment>
<gene>
    <name evidence="1" type="primary">nhaA</name>
    <name type="ordered locus">RSal33209_2976</name>
</gene>
<keyword id="KW-0050">Antiport</keyword>
<keyword id="KW-1003">Cell membrane</keyword>
<keyword id="KW-0406">Ion transport</keyword>
<keyword id="KW-0472">Membrane</keyword>
<keyword id="KW-1185">Reference proteome</keyword>
<keyword id="KW-0915">Sodium</keyword>
<keyword id="KW-0739">Sodium transport</keyword>
<keyword id="KW-0812">Transmembrane</keyword>
<keyword id="KW-1133">Transmembrane helix</keyword>
<keyword id="KW-0813">Transport</keyword>